<sequence length="406" mass="44059">MELRVANANGSCENGSIVSLYCSSQEVLCQIVRGISPEEPYNATLITWQERVRKKYGFYIGVGLAFLSCFLIGTSVILKKKGLIRLVATGATRAVNGGYGYLKDPMWWAGMATMSAGEVANFGAYAFAPATVVTPLGALSVLISAIFSSYCLGESLNLLGKLGCVICMAGSTVMVIHAPKEEKVTTVAEMASKMKDTGFIVFAVLLVVSCLILIFIVAPRYGQRNILIYIIICSVIGSFSVTAVKGLGVTIRNFFQGLPVVRHPLPYILSLILGLSIIIQVNFLNRALDIFNTSLVFPIYYVFFTTVVVASSIVLFKEWYTMSAVDIVGTLSGFVTIILGVFMLHAFKDLDINQISLPHTHKNPTPAPAPEPTVIKLEDKNVLVDNIELASTPSPQQKPKVFMTDS</sequence>
<evidence type="ECO:0000250" key="1">
    <source>
        <dbReference type="UniProtKB" id="Q0D2K0"/>
    </source>
</evidence>
<evidence type="ECO:0000250" key="2">
    <source>
        <dbReference type="UniProtKB" id="Q9JJC8"/>
    </source>
</evidence>
<evidence type="ECO:0000255" key="3"/>
<evidence type="ECO:0000269" key="4">
    <source>
    </source>
</evidence>
<evidence type="ECO:0000305" key="5"/>
<proteinExistence type="evidence at protein level"/>
<feature type="chain" id="PRO_0000284448" description="Magnesium transporter NIPA4">
    <location>
        <begin position="1"/>
        <end position="406"/>
    </location>
</feature>
<feature type="topological domain" description="Extracellular" evidence="3">
    <location>
        <begin position="1"/>
        <end position="57"/>
    </location>
</feature>
<feature type="transmembrane region" description="Helical" evidence="3">
    <location>
        <begin position="58"/>
        <end position="78"/>
    </location>
</feature>
<feature type="topological domain" description="Cytoplasmic" evidence="3">
    <location>
        <begin position="79"/>
        <end position="126"/>
    </location>
</feature>
<feature type="transmembrane region" description="Helical" evidence="3">
    <location>
        <begin position="127"/>
        <end position="147"/>
    </location>
</feature>
<feature type="topological domain" description="Extracellular" evidence="3">
    <location>
        <begin position="148"/>
        <end position="155"/>
    </location>
</feature>
<feature type="transmembrane region" description="Helical" evidence="3">
    <location>
        <begin position="156"/>
        <end position="176"/>
    </location>
</feature>
<feature type="topological domain" description="Cytoplasmic" evidence="3">
    <location>
        <begin position="177"/>
        <end position="197"/>
    </location>
</feature>
<feature type="transmembrane region" description="Helical" evidence="3">
    <location>
        <begin position="198"/>
        <end position="218"/>
    </location>
</feature>
<feature type="topological domain" description="Extracellular" evidence="3">
    <location>
        <begin position="219"/>
        <end position="225"/>
    </location>
</feature>
<feature type="transmembrane region" description="Helical" evidence="3">
    <location>
        <begin position="226"/>
        <end position="246"/>
    </location>
</feature>
<feature type="topological domain" description="Cytoplasmic" evidence="3">
    <location>
        <begin position="247"/>
        <end position="263"/>
    </location>
</feature>
<feature type="transmembrane region" description="Helical" evidence="3">
    <location>
        <begin position="264"/>
        <end position="284"/>
    </location>
</feature>
<feature type="topological domain" description="Extracellular" evidence="3">
    <location>
        <begin position="285"/>
        <end position="295"/>
    </location>
</feature>
<feature type="transmembrane region" description="Helical" evidence="3">
    <location>
        <begin position="296"/>
        <end position="316"/>
    </location>
</feature>
<feature type="topological domain" description="Cytoplasmic" evidence="3">
    <location>
        <begin position="317"/>
        <end position="326"/>
    </location>
</feature>
<feature type="transmembrane region" description="Helical" evidence="3">
    <location>
        <begin position="327"/>
        <end position="347"/>
    </location>
</feature>
<feature type="topological domain" description="Extracellular" evidence="3">
    <location>
        <begin position="348"/>
        <end position="406"/>
    </location>
</feature>
<feature type="glycosylation site" description="N-linked (GlcNAc...) asparagine" evidence="3">
    <location>
        <position position="9"/>
    </location>
</feature>
<feature type="glycosylation site" description="N-linked (GlcNAc...) asparagine" evidence="3">
    <location>
        <position position="14"/>
    </location>
</feature>
<feature type="glycosylation site" description="N-linked (GlcNAc...) asparagine" evidence="3">
    <location>
        <position position="42"/>
    </location>
</feature>
<feature type="glycosylation site" description="N-linked (GlcNAc...) asparagine" evidence="3">
    <location>
        <position position="292"/>
    </location>
</feature>
<name>NIPA4_MOUSE</name>
<reference key="1">
    <citation type="journal article" date="2005" name="Science">
        <title>The transcriptional landscape of the mammalian genome.</title>
        <authorList>
            <person name="Carninci P."/>
            <person name="Kasukawa T."/>
            <person name="Katayama S."/>
            <person name="Gough J."/>
            <person name="Frith M.C."/>
            <person name="Maeda N."/>
            <person name="Oyama R."/>
            <person name="Ravasi T."/>
            <person name="Lenhard B."/>
            <person name="Wells C."/>
            <person name="Kodzius R."/>
            <person name="Shimokawa K."/>
            <person name="Bajic V.B."/>
            <person name="Brenner S.E."/>
            <person name="Batalov S."/>
            <person name="Forrest A.R."/>
            <person name="Zavolan M."/>
            <person name="Davis M.J."/>
            <person name="Wilming L.G."/>
            <person name="Aidinis V."/>
            <person name="Allen J.E."/>
            <person name="Ambesi-Impiombato A."/>
            <person name="Apweiler R."/>
            <person name="Aturaliya R.N."/>
            <person name="Bailey T.L."/>
            <person name="Bansal M."/>
            <person name="Baxter L."/>
            <person name="Beisel K.W."/>
            <person name="Bersano T."/>
            <person name="Bono H."/>
            <person name="Chalk A.M."/>
            <person name="Chiu K.P."/>
            <person name="Choudhary V."/>
            <person name="Christoffels A."/>
            <person name="Clutterbuck D.R."/>
            <person name="Crowe M.L."/>
            <person name="Dalla E."/>
            <person name="Dalrymple B.P."/>
            <person name="de Bono B."/>
            <person name="Della Gatta G."/>
            <person name="di Bernardo D."/>
            <person name="Down T."/>
            <person name="Engstrom P."/>
            <person name="Fagiolini M."/>
            <person name="Faulkner G."/>
            <person name="Fletcher C.F."/>
            <person name="Fukushima T."/>
            <person name="Furuno M."/>
            <person name="Futaki S."/>
            <person name="Gariboldi M."/>
            <person name="Georgii-Hemming P."/>
            <person name="Gingeras T.R."/>
            <person name="Gojobori T."/>
            <person name="Green R.E."/>
            <person name="Gustincich S."/>
            <person name="Harbers M."/>
            <person name="Hayashi Y."/>
            <person name="Hensch T.K."/>
            <person name="Hirokawa N."/>
            <person name="Hill D."/>
            <person name="Huminiecki L."/>
            <person name="Iacono M."/>
            <person name="Ikeo K."/>
            <person name="Iwama A."/>
            <person name="Ishikawa T."/>
            <person name="Jakt M."/>
            <person name="Kanapin A."/>
            <person name="Katoh M."/>
            <person name="Kawasawa Y."/>
            <person name="Kelso J."/>
            <person name="Kitamura H."/>
            <person name="Kitano H."/>
            <person name="Kollias G."/>
            <person name="Krishnan S.P."/>
            <person name="Kruger A."/>
            <person name="Kummerfeld S.K."/>
            <person name="Kurochkin I.V."/>
            <person name="Lareau L.F."/>
            <person name="Lazarevic D."/>
            <person name="Lipovich L."/>
            <person name="Liu J."/>
            <person name="Liuni S."/>
            <person name="McWilliam S."/>
            <person name="Madan Babu M."/>
            <person name="Madera M."/>
            <person name="Marchionni L."/>
            <person name="Matsuda H."/>
            <person name="Matsuzawa S."/>
            <person name="Miki H."/>
            <person name="Mignone F."/>
            <person name="Miyake S."/>
            <person name="Morris K."/>
            <person name="Mottagui-Tabar S."/>
            <person name="Mulder N."/>
            <person name="Nakano N."/>
            <person name="Nakauchi H."/>
            <person name="Ng P."/>
            <person name="Nilsson R."/>
            <person name="Nishiguchi S."/>
            <person name="Nishikawa S."/>
            <person name="Nori F."/>
            <person name="Ohara O."/>
            <person name="Okazaki Y."/>
            <person name="Orlando V."/>
            <person name="Pang K.C."/>
            <person name="Pavan W.J."/>
            <person name="Pavesi G."/>
            <person name="Pesole G."/>
            <person name="Petrovsky N."/>
            <person name="Piazza S."/>
            <person name="Reed J."/>
            <person name="Reid J.F."/>
            <person name="Ring B.Z."/>
            <person name="Ringwald M."/>
            <person name="Rost B."/>
            <person name="Ruan Y."/>
            <person name="Salzberg S.L."/>
            <person name="Sandelin A."/>
            <person name="Schneider C."/>
            <person name="Schoenbach C."/>
            <person name="Sekiguchi K."/>
            <person name="Semple C.A."/>
            <person name="Seno S."/>
            <person name="Sessa L."/>
            <person name="Sheng Y."/>
            <person name="Shibata Y."/>
            <person name="Shimada H."/>
            <person name="Shimada K."/>
            <person name="Silva D."/>
            <person name="Sinclair B."/>
            <person name="Sperling S."/>
            <person name="Stupka E."/>
            <person name="Sugiura K."/>
            <person name="Sultana R."/>
            <person name="Takenaka Y."/>
            <person name="Taki K."/>
            <person name="Tammoja K."/>
            <person name="Tan S.L."/>
            <person name="Tang S."/>
            <person name="Taylor M.S."/>
            <person name="Tegner J."/>
            <person name="Teichmann S.A."/>
            <person name="Ueda H.R."/>
            <person name="van Nimwegen E."/>
            <person name="Verardo R."/>
            <person name="Wei C.L."/>
            <person name="Yagi K."/>
            <person name="Yamanishi H."/>
            <person name="Zabarovsky E."/>
            <person name="Zhu S."/>
            <person name="Zimmer A."/>
            <person name="Hide W."/>
            <person name="Bult C."/>
            <person name="Grimmond S.M."/>
            <person name="Teasdale R.D."/>
            <person name="Liu E.T."/>
            <person name="Brusic V."/>
            <person name="Quackenbush J."/>
            <person name="Wahlestedt C."/>
            <person name="Mattick J.S."/>
            <person name="Hume D.A."/>
            <person name="Kai C."/>
            <person name="Sasaki D."/>
            <person name="Tomaru Y."/>
            <person name="Fukuda S."/>
            <person name="Kanamori-Katayama M."/>
            <person name="Suzuki M."/>
            <person name="Aoki J."/>
            <person name="Arakawa T."/>
            <person name="Iida J."/>
            <person name="Imamura K."/>
            <person name="Itoh M."/>
            <person name="Kato T."/>
            <person name="Kawaji H."/>
            <person name="Kawagashira N."/>
            <person name="Kawashima T."/>
            <person name="Kojima M."/>
            <person name="Kondo S."/>
            <person name="Konno H."/>
            <person name="Nakano K."/>
            <person name="Ninomiya N."/>
            <person name="Nishio T."/>
            <person name="Okada M."/>
            <person name="Plessy C."/>
            <person name="Shibata K."/>
            <person name="Shiraki T."/>
            <person name="Suzuki S."/>
            <person name="Tagami M."/>
            <person name="Waki K."/>
            <person name="Watahiki A."/>
            <person name="Okamura-Oho Y."/>
            <person name="Suzuki H."/>
            <person name="Kawai J."/>
            <person name="Hayashizaki Y."/>
        </authorList>
    </citation>
    <scope>NUCLEOTIDE SEQUENCE [LARGE SCALE MRNA]</scope>
    <source>
        <strain>C57BL/6J</strain>
        <tissue>Urinary bladder</tissue>
    </source>
</reference>
<reference key="2">
    <citation type="journal article" date="2009" name="PLoS Biol.">
        <title>Lineage-specific biology revealed by a finished genome assembly of the mouse.</title>
        <authorList>
            <person name="Church D.M."/>
            <person name="Goodstadt L."/>
            <person name="Hillier L.W."/>
            <person name="Zody M.C."/>
            <person name="Goldstein S."/>
            <person name="She X."/>
            <person name="Bult C.J."/>
            <person name="Agarwala R."/>
            <person name="Cherry J.L."/>
            <person name="DiCuccio M."/>
            <person name="Hlavina W."/>
            <person name="Kapustin Y."/>
            <person name="Meric P."/>
            <person name="Maglott D."/>
            <person name="Birtle Z."/>
            <person name="Marques A.C."/>
            <person name="Graves T."/>
            <person name="Zhou S."/>
            <person name="Teague B."/>
            <person name="Potamousis K."/>
            <person name="Churas C."/>
            <person name="Place M."/>
            <person name="Herschleb J."/>
            <person name="Runnheim R."/>
            <person name="Forrest D."/>
            <person name="Amos-Landgraf J."/>
            <person name="Schwartz D.C."/>
            <person name="Cheng Z."/>
            <person name="Lindblad-Toh K."/>
            <person name="Eichler E.E."/>
            <person name="Ponting C.P."/>
        </authorList>
    </citation>
    <scope>NUCLEOTIDE SEQUENCE [LARGE SCALE GENOMIC DNA]</scope>
    <source>
        <strain>C57BL/6J</strain>
    </source>
</reference>
<reference key="3">
    <citation type="submission" date="2005-09" db="EMBL/GenBank/DDBJ databases">
        <authorList>
            <person name="Mural R.J."/>
            <person name="Adams M.D."/>
            <person name="Myers E.W."/>
            <person name="Smith H.O."/>
            <person name="Venter J.C."/>
        </authorList>
    </citation>
    <scope>NUCLEOTIDE SEQUENCE [LARGE SCALE GENOMIC DNA]</scope>
</reference>
<reference key="4">
    <citation type="journal article" date="2004" name="Genome Res.">
        <title>The status, quality, and expansion of the NIH full-length cDNA project: the Mammalian Gene Collection (MGC).</title>
        <authorList>
            <consortium name="The MGC Project Team"/>
        </authorList>
    </citation>
    <scope>NUCLEOTIDE SEQUENCE [LARGE SCALE MRNA]</scope>
</reference>
<reference key="5">
    <citation type="journal article" date="2008" name="Am. J. Physiol.">
        <title>Functional characterization of NIPA2, a selective Mg2+ transporter.</title>
        <authorList>
            <person name="Goytain A."/>
            <person name="Hines R.M."/>
            <person name="Quamme G.A."/>
        </authorList>
    </citation>
    <scope>FUNCTION</scope>
    <scope>INDUCTION</scope>
    <scope>BIOPHYSICOCHEMICAL PROPERTIES</scope>
    <scope>CATALYTIC ACTIVITY</scope>
</reference>
<keyword id="KW-1003">Cell membrane</keyword>
<keyword id="KW-0325">Glycoprotein</keyword>
<keyword id="KW-0406">Ion transport</keyword>
<keyword id="KW-0460">Magnesium</keyword>
<keyword id="KW-0472">Membrane</keyword>
<keyword id="KW-0675">Receptor</keyword>
<keyword id="KW-1185">Reference proteome</keyword>
<keyword id="KW-0812">Transmembrane</keyword>
<keyword id="KW-1133">Transmembrane helix</keyword>
<keyword id="KW-0813">Transport</keyword>
<gene>
    <name type="primary">Nipal4</name>
    <name type="synonym">Ichn</name>
    <name type="synonym">Nipa4</name>
</gene>
<accession>Q8BZF2</accession>
<accession>A4QPF8</accession>
<protein>
    <recommendedName>
        <fullName>Magnesium transporter NIPA4</fullName>
    </recommendedName>
    <alternativeName>
        <fullName>Ichthyin</fullName>
    </alternativeName>
    <alternativeName>
        <fullName>NIPA-like protein 4</fullName>
    </alternativeName>
    <alternativeName>
        <fullName>Non-imprinted in Prader-Willi/Angelman syndrome region protein 4 homolog</fullName>
    </alternativeName>
</protein>
<dbReference type="EMBL" id="AK035561">
    <property type="protein sequence ID" value="BAC29107.1"/>
    <property type="molecule type" value="mRNA"/>
</dbReference>
<dbReference type="EMBL" id="AL663031">
    <property type="status" value="NOT_ANNOTATED_CDS"/>
    <property type="molecule type" value="Genomic_DNA"/>
</dbReference>
<dbReference type="EMBL" id="AL713958">
    <property type="status" value="NOT_ANNOTATED_CDS"/>
    <property type="molecule type" value="Genomic_DNA"/>
</dbReference>
<dbReference type="EMBL" id="CH466575">
    <property type="protein sequence ID" value="EDL33826.1"/>
    <property type="molecule type" value="Genomic_DNA"/>
</dbReference>
<dbReference type="EMBL" id="BC139819">
    <property type="protein sequence ID" value="AAI39820.1"/>
    <property type="molecule type" value="mRNA"/>
</dbReference>
<dbReference type="CCDS" id="CCDS24572.1"/>
<dbReference type="RefSeq" id="NP_766112.1">
    <property type="nucleotide sequence ID" value="NM_172524.3"/>
</dbReference>
<dbReference type="FunCoup" id="Q8BZF2">
    <property type="interactions" value="84"/>
</dbReference>
<dbReference type="STRING" id="10090.ENSMUSP00000020679"/>
<dbReference type="GlyCosmos" id="Q8BZF2">
    <property type="glycosylation" value="4 sites, No reported glycans"/>
</dbReference>
<dbReference type="GlyGen" id="Q8BZF2">
    <property type="glycosylation" value="4 sites"/>
</dbReference>
<dbReference type="PhosphoSitePlus" id="Q8BZF2"/>
<dbReference type="PaxDb" id="10090-ENSMUSP00000020679"/>
<dbReference type="ProteomicsDB" id="252967"/>
<dbReference type="Antibodypedia" id="48488">
    <property type="antibodies" value="70 antibodies from 15 providers"/>
</dbReference>
<dbReference type="Ensembl" id="ENSMUST00000020679.3">
    <property type="protein sequence ID" value="ENSMUSP00000020679.3"/>
    <property type="gene ID" value="ENSMUSG00000020411.3"/>
</dbReference>
<dbReference type="GeneID" id="214112"/>
<dbReference type="KEGG" id="mmu:214112"/>
<dbReference type="UCSC" id="uc007ioa.1">
    <property type="organism name" value="mouse"/>
</dbReference>
<dbReference type="AGR" id="MGI:2444671"/>
<dbReference type="CTD" id="348938"/>
<dbReference type="MGI" id="MGI:2444671">
    <property type="gene designation" value="Nipal4"/>
</dbReference>
<dbReference type="VEuPathDB" id="HostDB:ENSMUSG00000020411"/>
<dbReference type="eggNOG" id="KOG2922">
    <property type="taxonomic scope" value="Eukaryota"/>
</dbReference>
<dbReference type="GeneTree" id="ENSGT00940000159087"/>
<dbReference type="HOGENOM" id="CLU_012349_1_2_1"/>
<dbReference type="InParanoid" id="Q8BZF2"/>
<dbReference type="OMA" id="MGAGEVC"/>
<dbReference type="OrthoDB" id="6428174at2759"/>
<dbReference type="PhylomeDB" id="Q8BZF2"/>
<dbReference type="TreeFam" id="TF313214"/>
<dbReference type="Reactome" id="R-MMU-5223345">
    <property type="pathway name" value="Miscellaneous transport and binding events"/>
</dbReference>
<dbReference type="BioGRID-ORCS" id="214112">
    <property type="hits" value="0 hits in 77 CRISPR screens"/>
</dbReference>
<dbReference type="PRO" id="PR:Q8BZF2"/>
<dbReference type="Proteomes" id="UP000000589">
    <property type="component" value="Chromosome 11"/>
</dbReference>
<dbReference type="RNAct" id="Q8BZF2">
    <property type="molecule type" value="protein"/>
</dbReference>
<dbReference type="Bgee" id="ENSMUSG00000020411">
    <property type="expression patterns" value="Expressed in urinary bladder urothelium and 124 other cell types or tissues"/>
</dbReference>
<dbReference type="GO" id="GO:0005886">
    <property type="term" value="C:plasma membrane"/>
    <property type="evidence" value="ECO:0007669"/>
    <property type="project" value="UniProtKB-SubCell"/>
</dbReference>
<dbReference type="GO" id="GO:0015095">
    <property type="term" value="F:magnesium ion transmembrane transporter activity"/>
    <property type="evidence" value="ECO:0007669"/>
    <property type="project" value="InterPro"/>
</dbReference>
<dbReference type="GO" id="GO:0015693">
    <property type="term" value="P:magnesium ion transport"/>
    <property type="evidence" value="ECO:0000314"/>
    <property type="project" value="UniProtKB"/>
</dbReference>
<dbReference type="InterPro" id="IPR008521">
    <property type="entry name" value="Mg_trans_NIPA"/>
</dbReference>
<dbReference type="PANTHER" id="PTHR12570">
    <property type="match status" value="1"/>
</dbReference>
<dbReference type="PANTHER" id="PTHR12570:SF7">
    <property type="entry name" value="MAGNESIUM TRANSPORTER NIPA4"/>
    <property type="match status" value="1"/>
</dbReference>
<dbReference type="Pfam" id="PF05653">
    <property type="entry name" value="Mg_trans_NIPA"/>
    <property type="match status" value="1"/>
</dbReference>
<dbReference type="SUPFAM" id="SSF103481">
    <property type="entry name" value="Multidrug resistance efflux transporter EmrE"/>
    <property type="match status" value="1"/>
</dbReference>
<organism>
    <name type="scientific">Mus musculus</name>
    <name type="common">Mouse</name>
    <dbReference type="NCBI Taxonomy" id="10090"/>
    <lineage>
        <taxon>Eukaryota</taxon>
        <taxon>Metazoa</taxon>
        <taxon>Chordata</taxon>
        <taxon>Craniata</taxon>
        <taxon>Vertebrata</taxon>
        <taxon>Euteleostomi</taxon>
        <taxon>Mammalia</taxon>
        <taxon>Eutheria</taxon>
        <taxon>Euarchontoglires</taxon>
        <taxon>Glires</taxon>
        <taxon>Rodentia</taxon>
        <taxon>Myomorpha</taxon>
        <taxon>Muroidea</taxon>
        <taxon>Muridae</taxon>
        <taxon>Murinae</taxon>
        <taxon>Mus</taxon>
        <taxon>Mus</taxon>
    </lineage>
</organism>
<comment type="function">
    <text evidence="1 4">Acts as a Mg(2+) transporter. Can also transport other divalent cations such as Ba(2+), Sr(2+) and Fe(2+) but to a much less extent than Mg(2+) (PubMed:18667602). May be a receptor for ligands (trioxilins A3 and B3) from the hepoxilin pathway (By similarity).</text>
</comment>
<comment type="catalytic activity">
    <reaction evidence="4">
        <text>Mg(2+)(in) = Mg(2+)(out)</text>
        <dbReference type="Rhea" id="RHEA:29827"/>
        <dbReference type="ChEBI" id="CHEBI:18420"/>
    </reaction>
</comment>
<comment type="biophysicochemical properties">
    <kinetics>
        <KM evidence="4">0.36 mM for magnesium ions</KM>
    </kinetics>
</comment>
<comment type="subcellular location">
    <subcellularLocation>
        <location evidence="2">Cell membrane</location>
        <topology evidence="3">Multi-pass membrane protein</topology>
    </subcellularLocation>
</comment>
<comment type="induction">
    <text evidence="4">Up-regulated by low magnesium ion levels.</text>
</comment>
<comment type="similarity">
    <text evidence="5">Belongs to the NIPA family.</text>
</comment>